<name>RSMI_RHILO</name>
<accession>Q98DM9</accession>
<gene>
    <name evidence="1" type="primary">rsmI</name>
    <name type="ordered locus">mlr4632</name>
</gene>
<comment type="function">
    <text evidence="1">Catalyzes the 2'-O-methylation of the ribose of cytidine 1402 (C1402) in 16S rRNA.</text>
</comment>
<comment type="catalytic activity">
    <reaction evidence="1">
        <text>cytidine(1402) in 16S rRNA + S-adenosyl-L-methionine = 2'-O-methylcytidine(1402) in 16S rRNA + S-adenosyl-L-homocysteine + H(+)</text>
        <dbReference type="Rhea" id="RHEA:42924"/>
        <dbReference type="Rhea" id="RHEA-COMP:10285"/>
        <dbReference type="Rhea" id="RHEA-COMP:10286"/>
        <dbReference type="ChEBI" id="CHEBI:15378"/>
        <dbReference type="ChEBI" id="CHEBI:57856"/>
        <dbReference type="ChEBI" id="CHEBI:59789"/>
        <dbReference type="ChEBI" id="CHEBI:74495"/>
        <dbReference type="ChEBI" id="CHEBI:82748"/>
        <dbReference type="EC" id="2.1.1.198"/>
    </reaction>
</comment>
<comment type="subcellular location">
    <subcellularLocation>
        <location evidence="1">Cytoplasm</location>
    </subcellularLocation>
</comment>
<comment type="similarity">
    <text evidence="1">Belongs to the methyltransferase superfamily. RsmI family.</text>
</comment>
<organism>
    <name type="scientific">Mesorhizobium japonicum (strain LMG 29417 / CECT 9101 / MAFF 303099)</name>
    <name type="common">Mesorhizobium loti (strain MAFF 303099)</name>
    <dbReference type="NCBI Taxonomy" id="266835"/>
    <lineage>
        <taxon>Bacteria</taxon>
        <taxon>Pseudomonadati</taxon>
        <taxon>Pseudomonadota</taxon>
        <taxon>Alphaproteobacteria</taxon>
        <taxon>Hyphomicrobiales</taxon>
        <taxon>Phyllobacteriaceae</taxon>
        <taxon>Mesorhizobium</taxon>
    </lineage>
</organism>
<dbReference type="EC" id="2.1.1.198" evidence="1"/>
<dbReference type="EMBL" id="BA000012">
    <property type="protein sequence ID" value="BAB51241.1"/>
    <property type="molecule type" value="Genomic_DNA"/>
</dbReference>
<dbReference type="SMR" id="Q98DM9"/>
<dbReference type="KEGG" id="mlo:mlr4632"/>
<dbReference type="eggNOG" id="COG0313">
    <property type="taxonomic scope" value="Bacteria"/>
</dbReference>
<dbReference type="HOGENOM" id="CLU_044779_2_1_5"/>
<dbReference type="Proteomes" id="UP000000552">
    <property type="component" value="Chromosome"/>
</dbReference>
<dbReference type="GO" id="GO:0005737">
    <property type="term" value="C:cytoplasm"/>
    <property type="evidence" value="ECO:0007669"/>
    <property type="project" value="UniProtKB-SubCell"/>
</dbReference>
<dbReference type="GO" id="GO:0070677">
    <property type="term" value="F:rRNA (cytosine-2'-O-)-methyltransferase activity"/>
    <property type="evidence" value="ECO:0007669"/>
    <property type="project" value="UniProtKB-UniRule"/>
</dbReference>
<dbReference type="CDD" id="cd11648">
    <property type="entry name" value="RsmI"/>
    <property type="match status" value="1"/>
</dbReference>
<dbReference type="FunFam" id="3.30.950.10:FF:000002">
    <property type="entry name" value="Ribosomal RNA small subunit methyltransferase I"/>
    <property type="match status" value="1"/>
</dbReference>
<dbReference type="FunFam" id="3.40.1010.10:FF:000007">
    <property type="entry name" value="Ribosomal RNA small subunit methyltransferase I"/>
    <property type="match status" value="1"/>
</dbReference>
<dbReference type="Gene3D" id="3.40.1010.10">
    <property type="entry name" value="Cobalt-precorrin-4 Transmethylase, Domain 1"/>
    <property type="match status" value="1"/>
</dbReference>
<dbReference type="Gene3D" id="3.30.950.10">
    <property type="entry name" value="Methyltransferase, Cobalt-precorrin-4 Transmethylase, Domain 2"/>
    <property type="match status" value="1"/>
</dbReference>
<dbReference type="HAMAP" id="MF_01877">
    <property type="entry name" value="16SrRNA_methyltr_I"/>
    <property type="match status" value="1"/>
</dbReference>
<dbReference type="InterPro" id="IPR000878">
    <property type="entry name" value="4pyrrol_Mease"/>
</dbReference>
<dbReference type="InterPro" id="IPR035996">
    <property type="entry name" value="4pyrrol_Methylase_sf"/>
</dbReference>
<dbReference type="InterPro" id="IPR014777">
    <property type="entry name" value="4pyrrole_Mease_sub1"/>
</dbReference>
<dbReference type="InterPro" id="IPR014776">
    <property type="entry name" value="4pyrrole_Mease_sub2"/>
</dbReference>
<dbReference type="InterPro" id="IPR008189">
    <property type="entry name" value="rRNA_ssu_MeTfrase_I"/>
</dbReference>
<dbReference type="InterPro" id="IPR053910">
    <property type="entry name" value="RsmI_HTH"/>
</dbReference>
<dbReference type="InterPro" id="IPR018063">
    <property type="entry name" value="SAM_MeTrfase_RsmI_CS"/>
</dbReference>
<dbReference type="NCBIfam" id="TIGR00096">
    <property type="entry name" value="16S rRNA (cytidine(1402)-2'-O)-methyltransferase"/>
    <property type="match status" value="1"/>
</dbReference>
<dbReference type="PANTHER" id="PTHR46111">
    <property type="entry name" value="RIBOSOMAL RNA SMALL SUBUNIT METHYLTRANSFERASE I"/>
    <property type="match status" value="1"/>
</dbReference>
<dbReference type="PANTHER" id="PTHR46111:SF1">
    <property type="entry name" value="RIBOSOMAL RNA SMALL SUBUNIT METHYLTRANSFERASE I"/>
    <property type="match status" value="1"/>
</dbReference>
<dbReference type="Pfam" id="PF23016">
    <property type="entry name" value="RsmI_C"/>
    <property type="match status" value="1"/>
</dbReference>
<dbReference type="Pfam" id="PF00590">
    <property type="entry name" value="TP_methylase"/>
    <property type="match status" value="1"/>
</dbReference>
<dbReference type="PIRSF" id="PIRSF005917">
    <property type="entry name" value="MTase_YraL"/>
    <property type="match status" value="1"/>
</dbReference>
<dbReference type="SUPFAM" id="SSF53790">
    <property type="entry name" value="Tetrapyrrole methylase"/>
    <property type="match status" value="1"/>
</dbReference>
<dbReference type="PROSITE" id="PS01296">
    <property type="entry name" value="RSMI"/>
    <property type="match status" value="1"/>
</dbReference>
<evidence type="ECO:0000255" key="1">
    <source>
        <dbReference type="HAMAP-Rule" id="MF_01877"/>
    </source>
</evidence>
<feature type="chain" id="PRO_0000211952" description="Ribosomal RNA small subunit methyltransferase I">
    <location>
        <begin position="1"/>
        <end position="294"/>
    </location>
</feature>
<reference key="1">
    <citation type="journal article" date="2000" name="DNA Res.">
        <title>Complete genome structure of the nitrogen-fixing symbiotic bacterium Mesorhizobium loti.</title>
        <authorList>
            <person name="Kaneko T."/>
            <person name="Nakamura Y."/>
            <person name="Sato S."/>
            <person name="Asamizu E."/>
            <person name="Kato T."/>
            <person name="Sasamoto S."/>
            <person name="Watanabe A."/>
            <person name="Idesawa K."/>
            <person name="Ishikawa A."/>
            <person name="Kawashima K."/>
            <person name="Kimura T."/>
            <person name="Kishida Y."/>
            <person name="Kiyokawa C."/>
            <person name="Kohara M."/>
            <person name="Matsumoto M."/>
            <person name="Matsuno A."/>
            <person name="Mochizuki Y."/>
            <person name="Nakayama S."/>
            <person name="Nakazaki N."/>
            <person name="Shimpo S."/>
            <person name="Sugimoto M."/>
            <person name="Takeuchi C."/>
            <person name="Yamada M."/>
            <person name="Tabata S."/>
        </authorList>
    </citation>
    <scope>NUCLEOTIDE SEQUENCE [LARGE SCALE GENOMIC DNA]</scope>
    <source>
        <strain>LMG 29417 / CECT 9101 / MAFF 303099</strain>
    </source>
</reference>
<proteinExistence type="inferred from homology"/>
<sequence>MVGQTEIPARPLEPALYLVATPIGNLADITLRALETLAAADIVACEDTRVSRVLLDRYGIRRRTTAYHEHNAGEAGPKLIAALQGGQSVALISDAGTPLVSDPGYRLVGEAIDHGIRVVPIPGPSAPLAALTASGLPSDAFLFAGFLPVKVGQRLTRLEALKAVPATLIFFESPRRLAESLGAMVEALGGERKAAIGRELTKTFEEMRTGTLRALADHYAAADTPKGEIVVCVGPAEAKADEPADIDRLLLSLAAEMPASKAASEAAKMTGGQKQALYRRLLELKDTSGEGDGG</sequence>
<protein>
    <recommendedName>
        <fullName evidence="1">Ribosomal RNA small subunit methyltransferase I</fullName>
        <ecNumber evidence="1">2.1.1.198</ecNumber>
    </recommendedName>
    <alternativeName>
        <fullName evidence="1">16S rRNA 2'-O-ribose C1402 methyltransferase</fullName>
    </alternativeName>
    <alternativeName>
        <fullName evidence="1">rRNA (cytidine-2'-O-)-methyltransferase RsmI</fullName>
    </alternativeName>
</protein>
<keyword id="KW-0963">Cytoplasm</keyword>
<keyword id="KW-0489">Methyltransferase</keyword>
<keyword id="KW-0698">rRNA processing</keyword>
<keyword id="KW-0949">S-adenosyl-L-methionine</keyword>
<keyword id="KW-0808">Transferase</keyword>